<sequence length="111" mass="12093">MIQVLLVTLCLAVFPYQGSSIILESGNVNDYEVVYPRKVTALPKGAIQPKNPCCDAATCKLTPGSQCAEGLCCDQCKFIKAGKICRRARGDNPDYRCTGQSGDCPRKHFYA</sequence>
<accession>Q805F7</accession>
<dbReference type="EMBL" id="AB078903">
    <property type="protein sequence ID" value="BAC55944.1"/>
    <property type="molecule type" value="mRNA"/>
</dbReference>
<dbReference type="PDB" id="3C05">
    <property type="method" value="X-ray"/>
    <property type="resolution" value="1.70 A"/>
    <property type="chains" value="A/C=49-109"/>
</dbReference>
<dbReference type="PDBsum" id="3C05"/>
<dbReference type="SMR" id="Q805F7"/>
<dbReference type="IntAct" id="Q805F7">
    <property type="interactions" value="1"/>
</dbReference>
<dbReference type="EvolutionaryTrace" id="Q805F7"/>
<dbReference type="GO" id="GO:0005576">
    <property type="term" value="C:extracellular region"/>
    <property type="evidence" value="ECO:0007669"/>
    <property type="project" value="UniProtKB-SubCell"/>
</dbReference>
<dbReference type="GO" id="GO:0005886">
    <property type="term" value="C:plasma membrane"/>
    <property type="evidence" value="ECO:0007669"/>
    <property type="project" value="TreeGrafter"/>
</dbReference>
<dbReference type="GO" id="GO:0090729">
    <property type="term" value="F:toxin activity"/>
    <property type="evidence" value="ECO:0007669"/>
    <property type="project" value="UniProtKB-KW"/>
</dbReference>
<dbReference type="GO" id="GO:0007155">
    <property type="term" value="P:cell adhesion"/>
    <property type="evidence" value="ECO:0000304"/>
    <property type="project" value="UniProtKB"/>
</dbReference>
<dbReference type="GO" id="GO:0030195">
    <property type="term" value="P:negative regulation of blood coagulation"/>
    <property type="evidence" value="ECO:0000314"/>
    <property type="project" value="UniProtKB"/>
</dbReference>
<dbReference type="FunFam" id="4.10.70.10:FF:000005">
    <property type="entry name" value="Zinc metalloproteinase/disintegrin"/>
    <property type="match status" value="1"/>
</dbReference>
<dbReference type="Gene3D" id="4.10.70.10">
    <property type="entry name" value="Disintegrin domain"/>
    <property type="match status" value="1"/>
</dbReference>
<dbReference type="InterPro" id="IPR018358">
    <property type="entry name" value="Disintegrin_CS"/>
</dbReference>
<dbReference type="InterPro" id="IPR001762">
    <property type="entry name" value="Disintegrin_dom"/>
</dbReference>
<dbReference type="InterPro" id="IPR036436">
    <property type="entry name" value="Disintegrin_dom_sf"/>
</dbReference>
<dbReference type="PANTHER" id="PTHR11905">
    <property type="entry name" value="ADAM A DISINTEGRIN AND METALLOPROTEASE DOMAIN"/>
    <property type="match status" value="1"/>
</dbReference>
<dbReference type="PANTHER" id="PTHR11905:SF32">
    <property type="entry name" value="DISINTEGRIN AND METALLOPROTEINASE DOMAIN-CONTAINING PROTEIN 28"/>
    <property type="match status" value="1"/>
</dbReference>
<dbReference type="Pfam" id="PF00200">
    <property type="entry name" value="Disintegrin"/>
    <property type="match status" value="1"/>
</dbReference>
<dbReference type="PRINTS" id="PR00289">
    <property type="entry name" value="DISINTEGRIN"/>
</dbReference>
<dbReference type="SMART" id="SM00050">
    <property type="entry name" value="DISIN"/>
    <property type="match status" value="1"/>
</dbReference>
<dbReference type="SUPFAM" id="SSF57552">
    <property type="entry name" value="Blood coagulation inhibitor (disintegrin)"/>
    <property type="match status" value="1"/>
</dbReference>
<dbReference type="PROSITE" id="PS00427">
    <property type="entry name" value="DISINTEGRIN_1"/>
    <property type="match status" value="1"/>
</dbReference>
<dbReference type="PROSITE" id="PS50214">
    <property type="entry name" value="DISINTEGRIN_2"/>
    <property type="match status" value="1"/>
</dbReference>
<organism evidence="6">
    <name type="scientific">Agkistrodon contortrix contortrix</name>
    <name type="common">Southern copperhead</name>
    <dbReference type="NCBI Taxonomy" id="8713"/>
    <lineage>
        <taxon>Eukaryota</taxon>
        <taxon>Metazoa</taxon>
        <taxon>Chordata</taxon>
        <taxon>Craniata</taxon>
        <taxon>Vertebrata</taxon>
        <taxon>Euteleostomi</taxon>
        <taxon>Lepidosauria</taxon>
        <taxon>Squamata</taxon>
        <taxon>Bifurcata</taxon>
        <taxon>Unidentata</taxon>
        <taxon>Episquamata</taxon>
        <taxon>Toxicofera</taxon>
        <taxon>Serpentes</taxon>
        <taxon>Colubroidea</taxon>
        <taxon>Viperidae</taxon>
        <taxon>Crotalinae</taxon>
        <taxon>Agkistrodon</taxon>
    </lineage>
</organism>
<keyword id="KW-0002">3D-structure</keyword>
<keyword id="KW-1217">Cell adhesion impairing toxin</keyword>
<keyword id="KW-0903">Direct protein sequencing</keyword>
<keyword id="KW-1015">Disulfide bond</keyword>
<keyword id="KW-1199">Hemostasis impairing toxin</keyword>
<keyword id="KW-1201">Platelet aggregation inhibiting toxin</keyword>
<keyword id="KW-0873">Pyrrolidone carboxylic acid</keyword>
<keyword id="KW-0964">Secreted</keyword>
<keyword id="KW-0732">Signal</keyword>
<keyword id="KW-0800">Toxin</keyword>
<reference evidence="5" key="1">
    <citation type="journal article" date="2002" name="Biochemistry">
        <title>A new gene structure of the disintegrin family: a subunit of dimeric disintegrin has a short coding region.</title>
        <authorList>
            <person name="Okuda D."/>
            <person name="Koike H."/>
            <person name="Morita T."/>
        </authorList>
    </citation>
    <scope>NUCLEOTIDE SEQUENCE [MRNA]</scope>
    <scope>PROTEIN SEQUENCE OF 47-109</scope>
    <scope>PYROGLUTAMATE FORMATION AT GLN-48 IN PROCESSED FORM</scope>
    <scope>FUNCTION</scope>
    <scope>SUBUNIT</scope>
    <source>
        <tissue evidence="3">Venom</tissue>
        <tissue>Venom gland</tissue>
    </source>
</reference>
<reference key="2">
    <citation type="journal article" date="2002" name="Acta Crystallogr. D">
        <title>Crystallization and preliminary crystallographic studies of dimeric disintegrins from the venom of two Agkistrodon snakes.</title>
        <authorList>
            <person name="Fujii Y."/>
            <person name="Okuda D."/>
            <person name="Fujimoto Z."/>
            <person name="Morita T."/>
            <person name="Mizuno H."/>
        </authorList>
    </citation>
    <scope>CRYSTALLIZATION</scope>
    <source>
        <tissue>Venom</tissue>
    </source>
</reference>
<reference key="3">
    <citation type="journal article" date="2008" name="Acta Crystallogr. D">
        <title>Structure of acostatin, a dimeric disintegrin from Southern copperhead (Agkistrodon contortrix contortrix), at 1.7 A resolution.</title>
        <authorList>
            <person name="Moiseeva N."/>
            <person name="Bau R."/>
            <person name="Swenson S.D."/>
            <person name="Markland F.S. Jr."/>
            <person name="Choe J.Y."/>
            <person name="Liu Z.J."/>
            <person name="Allaire M."/>
        </authorList>
    </citation>
    <scope>X-RAY CRYSTALLOGRAPHY (1.7 ANGSTROMS) OF 48-109</scope>
    <scope>DISULFIDE BONDS</scope>
    <scope>PYROGLUTAMATE FORMATION AT GLN-48</scope>
</reference>
<protein>
    <recommendedName>
        <fullName>Disintegrin acostatin-alpha</fullName>
    </recommendedName>
    <component>
        <recommendedName>
            <fullName>Disintegrin acostatin-alpha, processed form</fullName>
        </recommendedName>
    </component>
</protein>
<evidence type="ECO:0000255" key="1"/>
<evidence type="ECO:0000255" key="2">
    <source>
        <dbReference type="PROSITE-ProRule" id="PRU00068"/>
    </source>
</evidence>
<evidence type="ECO:0000269" key="3">
    <source>
    </source>
</evidence>
<evidence type="ECO:0000269" key="4">
    <source>
    </source>
</evidence>
<evidence type="ECO:0000305" key="5"/>
<evidence type="ECO:0000312" key="6">
    <source>
        <dbReference type="EMBL" id="BAC55944.1"/>
    </source>
</evidence>
<evidence type="ECO:0007829" key="7">
    <source>
        <dbReference type="PDB" id="3C05"/>
    </source>
</evidence>
<name>DIDA_AGKCO</name>
<comment type="function">
    <text evidence="3">Inhibits fibrinogen interaction with platelets. Acts by binding to alpha-IIb/beta-3 (ITGA2B/ITGB3) on the platelet surface and inhibits ADP-induced platelet aggregation in human platelet-rich plasma.</text>
</comment>
<comment type="subunit">
    <text evidence="3 4">Heterodimer with subunit beta; disulfide-linked.</text>
</comment>
<comment type="subcellular location">
    <subcellularLocation>
        <location>Secreted</location>
    </subcellularLocation>
</comment>
<comment type="tissue specificity">
    <text>Expressed by the venom gland.</text>
</comment>
<comment type="similarity">
    <text evidence="5">Belongs to the disintegrin family. Dimeric disintegrin subfamily.</text>
</comment>
<feature type="signal peptide" evidence="1">
    <location>
        <begin position="1"/>
        <end position="20"/>
    </location>
</feature>
<feature type="propeptide" id="PRO_0000007236" evidence="3">
    <location>
        <begin position="21"/>
        <end position="46"/>
    </location>
</feature>
<feature type="chain" id="PRO_0000007237" description="Disintegrin acostatin-alpha">
    <location>
        <begin position="47"/>
        <end position="109"/>
    </location>
</feature>
<feature type="chain" id="PRO_0000413008" description="Disintegrin acostatin-alpha, processed form">
    <location>
        <begin position="48"/>
        <end position="109"/>
    </location>
</feature>
<feature type="propeptide" id="PRO_0000007238">
    <location>
        <begin position="110"/>
        <end position="111"/>
    </location>
</feature>
<feature type="domain" description="Disintegrin" evidence="2">
    <location>
        <begin position="47"/>
        <end position="111"/>
    </location>
</feature>
<feature type="short sequence motif" description="Cell attachment site">
    <location>
        <begin position="89"/>
        <end position="91"/>
    </location>
</feature>
<feature type="modified residue" description="Pyrrolidone carboxylic acid; in Disintegrin acostatin-alpha, processed form" evidence="3 4">
    <location>
        <position position="48"/>
    </location>
</feature>
<feature type="disulfide bond" evidence="2 4">
    <location>
        <begin position="53"/>
        <end position="76"/>
    </location>
</feature>
<feature type="disulfide bond" description="Interchain (with C-431 in subunit beta)" evidence="2 4">
    <location>
        <position position="54"/>
    </location>
</feature>
<feature type="disulfide bond" description="Interchain (with C-426 in subunit beta)" evidence="2 4">
    <location>
        <position position="59"/>
    </location>
</feature>
<feature type="disulfide bond" evidence="2 4">
    <location>
        <begin position="67"/>
        <end position="73"/>
    </location>
</feature>
<feature type="disulfide bond" evidence="2 4">
    <location>
        <begin position="72"/>
        <end position="97"/>
    </location>
</feature>
<feature type="disulfide bond" evidence="2 4">
    <location>
        <begin position="85"/>
        <end position="104"/>
    </location>
</feature>
<feature type="turn" evidence="7">
    <location>
        <begin position="56"/>
        <end position="59"/>
    </location>
</feature>
<feature type="strand" evidence="7">
    <location>
        <begin position="68"/>
        <end position="70"/>
    </location>
</feature>
<feature type="strand" evidence="7">
    <location>
        <begin position="84"/>
        <end position="86"/>
    </location>
</feature>
<feature type="strand" evidence="7">
    <location>
        <begin position="89"/>
        <end position="92"/>
    </location>
</feature>
<proteinExistence type="evidence at protein level"/>